<gene>
    <name evidence="5" type="primary">taw22</name>
    <name evidence="4" type="synonym">trm5a</name>
    <name type="ordered locus">PYRAB01130</name>
    <name type="ORF">PAB2272</name>
</gene>
<reference key="1">
    <citation type="journal article" date="2003" name="Mol. Microbiol.">
        <title>An integrated analysis of the genome of the hyperthermophilic archaeon Pyrococcus abyssi.</title>
        <authorList>
            <person name="Cohen G.N."/>
            <person name="Barbe V."/>
            <person name="Flament D."/>
            <person name="Galperin M."/>
            <person name="Heilig R."/>
            <person name="Lecompte O."/>
            <person name="Poch O."/>
            <person name="Prieur D."/>
            <person name="Querellou J."/>
            <person name="Ripp R."/>
            <person name="Thierry J.-C."/>
            <person name="Van der Oost J."/>
            <person name="Weissenbach J."/>
            <person name="Zivanovic Y."/>
            <person name="Forterre P."/>
        </authorList>
    </citation>
    <scope>NUCLEOTIDE SEQUENCE [LARGE SCALE GENOMIC DNA]</scope>
    <source>
        <strain>GE5 / Orsay</strain>
    </source>
</reference>
<reference key="2">
    <citation type="journal article" date="2012" name="Curr. Microbiol.">
        <title>Re-annotation of two hyperthermophilic archaea Pyrococcus abyssi GE5 and Pyrococcus furiosus DSM 3638.</title>
        <authorList>
            <person name="Gao J."/>
            <person name="Wang J."/>
        </authorList>
    </citation>
    <scope>GENOME REANNOTATION</scope>
    <source>
        <strain>GE5 / Orsay</strain>
    </source>
</reference>
<reference key="3">
    <citation type="journal article" date="2010" name="Mol. Biol. Evol.">
        <title>Biosynthesis of wyosine derivatives in tRNA: an ancient and highly diverse pathway in Archaea.</title>
        <authorList>
            <person name="de Crecy-Lagard V."/>
            <person name="Brochier-Armanet C."/>
            <person name="Urbonavicius J."/>
            <person name="Fernandez B."/>
            <person name="Phillips G."/>
            <person name="Lyons B."/>
            <person name="Noma A."/>
            <person name="Alvarez S."/>
            <person name="Droogmans L."/>
            <person name="Armengaud J."/>
            <person name="Grosjean H."/>
        </authorList>
    </citation>
    <scope>FUNCTION</scope>
    <scope>CATALYTIC ACTIVITY</scope>
    <scope>GENE NAME</scope>
</reference>
<reference key="4">
    <citation type="journal article" date="2016" name="RNA">
        <title>Evolution of tRNAPhe:imG2 methyltransferases involved in the biosynthesis of wyosine derivatives in Archaea.</title>
        <authorList>
            <person name="Urbonavicius J."/>
            <person name="Rutkiene R."/>
            <person name="Lopato A."/>
            <person name="Tauraite D."/>
            <person name="Stankeviciute J."/>
            <person name="Aucynaite A."/>
            <person name="Kaliniene L."/>
            <person name="van Tilbeurgh H."/>
            <person name="Meskys R."/>
        </authorList>
    </citation>
    <scope>FUNCTION</scope>
    <scope>CATALYTIC ACTIVITY</scope>
    <scope>MUTAGENESIS OF ARG-133; PHE-165; GLU-173; ARG-174; GLU-213; PRO-260 AND PRO-262</scope>
</reference>
<reference evidence="9 10 11 12" key="5">
    <citation type="journal article" date="2016" name="Sci. Rep.">
        <title>Crystal structures of the bifunctional tRNA methyltransferase Trm5a.</title>
        <authorList>
            <person name="Wang C."/>
            <person name="Jia Q."/>
            <person name="Chen R."/>
            <person name="Wei Y."/>
            <person name="Li J."/>
            <person name="Ma J."/>
            <person name="Xie W."/>
        </authorList>
    </citation>
    <scope>X-RAY CRYSTALLOGRAPHY (1.76 ANGSTROMS) IN COMPLEXES WITH S-ADENOSYL-L-HOMOCYSTEINE AND SAM ANALOGS</scope>
</reference>
<dbReference type="EC" id="2.1.1.-" evidence="3 7"/>
<dbReference type="EC" id="2.1.1.228" evidence="2 3"/>
<dbReference type="EMBL" id="AJ248283">
    <property type="protein sequence ID" value="CAB49037.1"/>
    <property type="molecule type" value="Genomic_DNA"/>
</dbReference>
<dbReference type="EMBL" id="HE613800">
    <property type="protein sequence ID" value="CCE69489.1"/>
    <property type="molecule type" value="Genomic_DNA"/>
</dbReference>
<dbReference type="PIR" id="F75198">
    <property type="entry name" value="F75198"/>
</dbReference>
<dbReference type="RefSeq" id="WP_010867237.1">
    <property type="nucleotide sequence ID" value="NC_000868.1"/>
</dbReference>
<dbReference type="PDB" id="5HJI">
    <property type="method" value="X-ray"/>
    <property type="resolution" value="2.20 A"/>
    <property type="chains" value="A=1-333"/>
</dbReference>
<dbReference type="PDB" id="5HJJ">
    <property type="method" value="X-ray"/>
    <property type="resolution" value="2.00 A"/>
    <property type="chains" value="A=1-333"/>
</dbReference>
<dbReference type="PDB" id="5HJK">
    <property type="method" value="X-ray"/>
    <property type="resolution" value="2.00 A"/>
    <property type="chains" value="A=1-333"/>
</dbReference>
<dbReference type="PDB" id="5HJM">
    <property type="method" value="X-ray"/>
    <property type="resolution" value="1.76 A"/>
    <property type="chains" value="A=1-333"/>
</dbReference>
<dbReference type="PDB" id="5WT1">
    <property type="method" value="X-ray"/>
    <property type="resolution" value="2.60 A"/>
    <property type="chains" value="A/B=1-333"/>
</dbReference>
<dbReference type="PDB" id="5WT3">
    <property type="method" value="X-ray"/>
    <property type="resolution" value="3.20 A"/>
    <property type="chains" value="A=1-333"/>
</dbReference>
<dbReference type="PDBsum" id="5HJI"/>
<dbReference type="PDBsum" id="5HJJ"/>
<dbReference type="PDBsum" id="5HJK"/>
<dbReference type="PDBsum" id="5HJM"/>
<dbReference type="PDBsum" id="5WT1"/>
<dbReference type="PDBsum" id="5WT3"/>
<dbReference type="SMR" id="Q9V2G1"/>
<dbReference type="STRING" id="272844.PAB2272"/>
<dbReference type="KEGG" id="pab:PAB2272"/>
<dbReference type="PATRIC" id="fig|272844.11.peg.126"/>
<dbReference type="eggNOG" id="arCOG00033">
    <property type="taxonomic scope" value="Archaea"/>
</dbReference>
<dbReference type="HOGENOM" id="CLU_022610_0_1_2"/>
<dbReference type="OrthoDB" id="8079at2157"/>
<dbReference type="PhylomeDB" id="Q9V2G1"/>
<dbReference type="BioCyc" id="MetaCyc:MONOMER-18045"/>
<dbReference type="BRENDA" id="2.1.1.228">
    <property type="organism ID" value="5242"/>
</dbReference>
<dbReference type="BRENDA" id="2.1.1.282">
    <property type="organism ID" value="5242"/>
</dbReference>
<dbReference type="Proteomes" id="UP000000810">
    <property type="component" value="Chromosome"/>
</dbReference>
<dbReference type="Proteomes" id="UP000009139">
    <property type="component" value="Chromosome"/>
</dbReference>
<dbReference type="GO" id="GO:0005737">
    <property type="term" value="C:cytoplasm"/>
    <property type="evidence" value="ECO:0007669"/>
    <property type="project" value="UniProtKB-SubCell"/>
</dbReference>
<dbReference type="GO" id="GO:0052906">
    <property type="term" value="F:tRNA (guanine(37)-N1)-methyltransferase activity"/>
    <property type="evidence" value="ECO:0000314"/>
    <property type="project" value="UniProtKB"/>
</dbReference>
<dbReference type="GO" id="GO:0030488">
    <property type="term" value="P:tRNA methylation"/>
    <property type="evidence" value="ECO:0000314"/>
    <property type="project" value="UniProtKB"/>
</dbReference>
<dbReference type="GO" id="GO:0002939">
    <property type="term" value="P:tRNA N1-guanine methylation"/>
    <property type="evidence" value="ECO:0007669"/>
    <property type="project" value="TreeGrafter"/>
</dbReference>
<dbReference type="CDD" id="cd02440">
    <property type="entry name" value="AdoMet_MTases"/>
    <property type="match status" value="1"/>
</dbReference>
<dbReference type="FunFam" id="3.30.300.110:FF:000001">
    <property type="entry name" value="tRNA (guanine(37)-N1)-methyltransferase"/>
    <property type="match status" value="1"/>
</dbReference>
<dbReference type="FunFam" id="3.40.50.150:FF:000899">
    <property type="entry name" value="tRNA (guanine(37)-N1)/4-demethylwyosine(37)-methyltransferase Taw22"/>
    <property type="match status" value="1"/>
</dbReference>
<dbReference type="Gene3D" id="3.30.70.2580">
    <property type="match status" value="1"/>
</dbReference>
<dbReference type="Gene3D" id="3.30.300.110">
    <property type="entry name" value="Met-10+ protein-like domains"/>
    <property type="match status" value="1"/>
</dbReference>
<dbReference type="Gene3D" id="3.40.50.150">
    <property type="entry name" value="Vaccinia Virus protein VP39"/>
    <property type="match status" value="1"/>
</dbReference>
<dbReference type="InterPro" id="IPR030382">
    <property type="entry name" value="MeTrfase_TRM5/TYW2"/>
</dbReference>
<dbReference type="InterPro" id="IPR029063">
    <property type="entry name" value="SAM-dependent_MTases_sf"/>
</dbReference>
<dbReference type="InterPro" id="IPR056743">
    <property type="entry name" value="TRM5-TYW2-like_MTfase"/>
</dbReference>
<dbReference type="InterPro" id="IPR056744">
    <property type="entry name" value="TRM5/TYW2-like_N"/>
</dbReference>
<dbReference type="InterPro" id="IPR040601">
    <property type="entry name" value="Trm5a/b_N"/>
</dbReference>
<dbReference type="NCBIfam" id="NF047728">
    <property type="entry name" value="tRNAMtaseTaw22"/>
    <property type="match status" value="1"/>
</dbReference>
<dbReference type="PANTHER" id="PTHR23245:SF36">
    <property type="entry name" value="TRNA (GUANINE(37)-N1)-METHYLTRANSFERASE"/>
    <property type="match status" value="1"/>
</dbReference>
<dbReference type="PANTHER" id="PTHR23245">
    <property type="entry name" value="TRNA METHYLTRANSFERASE"/>
    <property type="match status" value="1"/>
</dbReference>
<dbReference type="Pfam" id="PF02475">
    <property type="entry name" value="TRM5-TYW2_MTfase"/>
    <property type="match status" value="1"/>
</dbReference>
<dbReference type="Pfam" id="PF18093">
    <property type="entry name" value="Trm5_N"/>
    <property type="match status" value="1"/>
</dbReference>
<dbReference type="Pfam" id="PF25133">
    <property type="entry name" value="TYW2_N_2"/>
    <property type="match status" value="1"/>
</dbReference>
<dbReference type="SUPFAM" id="SSF53335">
    <property type="entry name" value="S-adenosyl-L-methionine-dependent methyltransferases"/>
    <property type="match status" value="1"/>
</dbReference>
<dbReference type="PROSITE" id="PS51684">
    <property type="entry name" value="SAM_MT_TRM5_TYW2"/>
    <property type="match status" value="1"/>
</dbReference>
<protein>
    <recommendedName>
        <fullName evidence="6">tRNA (guanine(37)-N(1))/4-demethylwyosine(37)-methyltransferase Taw22</fullName>
        <ecNumber evidence="3 7">2.1.1.-</ecNumber>
        <ecNumber evidence="2 3">2.1.1.228</ecNumber>
    </recommendedName>
    <alternativeName>
        <fullName>M1G-methyltransferase</fullName>
    </alternativeName>
    <alternativeName>
        <fullName>tRNA [GM37] methyltransferase</fullName>
    </alternativeName>
    <alternativeName>
        <fullName evidence="5">tRNA(Phe):m1G/imG2 methyltransferase</fullName>
    </alternativeName>
</protein>
<organism>
    <name type="scientific">Pyrococcus abyssi (strain GE5 / Orsay)</name>
    <dbReference type="NCBI Taxonomy" id="272844"/>
    <lineage>
        <taxon>Archaea</taxon>
        <taxon>Methanobacteriati</taxon>
        <taxon>Methanobacteriota</taxon>
        <taxon>Thermococci</taxon>
        <taxon>Thermococcales</taxon>
        <taxon>Thermococcaceae</taxon>
        <taxon>Pyrococcus</taxon>
    </lineage>
</organism>
<evidence type="ECO:0000255" key="1">
    <source>
        <dbReference type="PROSITE-ProRule" id="PRU01021"/>
    </source>
</evidence>
<evidence type="ECO:0000269" key="2">
    <source>
    </source>
</evidence>
<evidence type="ECO:0000269" key="3">
    <source>
    </source>
</evidence>
<evidence type="ECO:0000303" key="4">
    <source>
    </source>
</evidence>
<evidence type="ECO:0000303" key="5">
    <source>
    </source>
</evidence>
<evidence type="ECO:0000305" key="6"/>
<evidence type="ECO:0000305" key="7">
    <source>
    </source>
</evidence>
<evidence type="ECO:0000305" key="8">
    <source>
    </source>
</evidence>
<evidence type="ECO:0007744" key="9">
    <source>
        <dbReference type="PDB" id="5HJI"/>
    </source>
</evidence>
<evidence type="ECO:0007744" key="10">
    <source>
        <dbReference type="PDB" id="5HJJ"/>
    </source>
</evidence>
<evidence type="ECO:0007744" key="11">
    <source>
        <dbReference type="PDB" id="5HJK"/>
    </source>
</evidence>
<evidence type="ECO:0007744" key="12">
    <source>
        <dbReference type="PDB" id="5HJM"/>
    </source>
</evidence>
<evidence type="ECO:0007829" key="13">
    <source>
        <dbReference type="PDB" id="5HJM"/>
    </source>
</evidence>
<evidence type="ECO:0007829" key="14">
    <source>
        <dbReference type="PDB" id="5WT1"/>
    </source>
</evidence>
<evidence type="ECO:0007829" key="15">
    <source>
        <dbReference type="PDB" id="5WT3"/>
    </source>
</evidence>
<sequence>MSGVKVRREDAKKVLELLKSVGILDGKRKAIRDEKYVIFPVTDTNIAKSLGLEVVDVELPMRPERQIYKNLEDLLPREIFKKLGRLDIVGDIAIVSIPDEILSEREVIVSAIRKLYPKVKVIARRGFHSGLYRIRELEVIWGENRLHTIHKENGVLIKVDLSKVFFNPRMKGERYRIAQLVNDGERILVPFAGVIPYPLVIARFKNVEVYAVEINEFAVKLAEENLELNRDRLKGKIKIIHGDVFEVLPNLPNFDRVVSPTPKGVDALSLTLSKAEKFLHYYDFVHESEIERFRERVLEECRRQGKECRVSVRKVSDYKPHVYKVCADVEILS</sequence>
<feature type="chain" id="PRO_0000407847" description="tRNA (guanine(37)-N(1))/4-demethylwyosine(37)-methyltransferase Taw22">
    <location>
        <begin position="1"/>
        <end position="333"/>
    </location>
</feature>
<feature type="binding site" evidence="1 8">
    <location>
        <position position="174"/>
    </location>
    <ligand>
        <name>S-adenosyl-L-methionine</name>
        <dbReference type="ChEBI" id="CHEBI:59789"/>
    </ligand>
</feature>
<feature type="binding site" evidence="8">
    <location>
        <position position="191"/>
    </location>
    <ligand>
        <name>S-adenosyl-L-methionine</name>
        <dbReference type="ChEBI" id="CHEBI:59789"/>
    </ligand>
</feature>
<feature type="binding site" evidence="1 8">
    <location>
        <begin position="213"/>
        <end position="214"/>
    </location>
    <ligand>
        <name>S-adenosyl-L-methionine</name>
        <dbReference type="ChEBI" id="CHEBI:59789"/>
    </ligand>
</feature>
<feature type="binding site" evidence="1 8">
    <location>
        <begin position="243"/>
        <end position="244"/>
    </location>
    <ligand>
        <name>S-adenosyl-L-methionine</name>
        <dbReference type="ChEBI" id="CHEBI:59789"/>
    </ligand>
</feature>
<feature type="mutagenesis site" description="Strong decrease in both activities." evidence="3">
    <original>R</original>
    <variation>A</variation>
    <location>
        <position position="133"/>
    </location>
</feature>
<feature type="mutagenesis site" description="Lack of activity." evidence="3">
    <original>F</original>
    <variation>A</variation>
    <location>
        <position position="165"/>
    </location>
</feature>
<feature type="mutagenesis site" description="Decrease in both activities." evidence="3">
    <original>E</original>
    <variation>A</variation>
    <location>
        <position position="173"/>
    </location>
</feature>
<feature type="mutagenesis site" description="Decrease in both activities." evidence="3">
    <original>R</original>
    <variation>A</variation>
    <location>
        <position position="174"/>
    </location>
</feature>
<feature type="mutagenesis site" description="Lack of activity." evidence="3">
    <original>E</original>
    <variation>A</variation>
    <location>
        <position position="213"/>
    </location>
</feature>
<feature type="mutagenesis site" description="Lack of tRNA(Phe):m1G methyltransferase activity, but does not affect tRNA(Phe):imG2 methyltransferase activity." evidence="3">
    <original>P</original>
    <variation>N</variation>
    <location>
        <position position="260"/>
    </location>
</feature>
<feature type="mutagenesis site" description="Strong decrease in both activities." evidence="3">
    <original>P</original>
    <variation>A</variation>
    <location>
        <position position="262"/>
    </location>
</feature>
<feature type="strand" evidence="13">
    <location>
        <begin position="2"/>
        <end position="7"/>
    </location>
</feature>
<feature type="helix" evidence="13">
    <location>
        <begin position="8"/>
        <end position="10"/>
    </location>
</feature>
<feature type="helix" evidence="13">
    <location>
        <begin position="11"/>
        <end position="21"/>
    </location>
</feature>
<feature type="strand" evidence="14">
    <location>
        <begin position="26"/>
        <end position="28"/>
    </location>
</feature>
<feature type="strand" evidence="13">
    <location>
        <begin position="34"/>
        <end position="42"/>
    </location>
</feature>
<feature type="helix" evidence="13">
    <location>
        <begin position="44"/>
        <end position="49"/>
    </location>
</feature>
<feature type="strand" evidence="13">
    <location>
        <begin position="53"/>
        <end position="56"/>
    </location>
</feature>
<feature type="helix" evidence="14">
    <location>
        <begin position="64"/>
        <end position="66"/>
    </location>
</feature>
<feature type="helix" evidence="13">
    <location>
        <begin position="71"/>
        <end position="74"/>
    </location>
</feature>
<feature type="helix" evidence="13">
    <location>
        <begin position="77"/>
        <end position="80"/>
    </location>
</feature>
<feature type="strand" evidence="13">
    <location>
        <begin position="87"/>
        <end position="89"/>
    </location>
</feature>
<feature type="strand" evidence="13">
    <location>
        <begin position="92"/>
        <end position="95"/>
    </location>
</feature>
<feature type="helix" evidence="13">
    <location>
        <begin position="99"/>
        <end position="104"/>
    </location>
</feature>
<feature type="helix" evidence="13">
    <location>
        <begin position="105"/>
        <end position="115"/>
    </location>
</feature>
<feature type="strand" evidence="13">
    <location>
        <begin position="121"/>
        <end position="129"/>
    </location>
</feature>
<feature type="turn" evidence="13">
    <location>
        <begin position="130"/>
        <end position="133"/>
    </location>
</feature>
<feature type="strand" evidence="13">
    <location>
        <begin position="134"/>
        <end position="144"/>
    </location>
</feature>
<feature type="strand" evidence="13">
    <location>
        <begin position="147"/>
        <end position="152"/>
    </location>
</feature>
<feature type="strand" evidence="13">
    <location>
        <begin position="155"/>
        <end position="160"/>
    </location>
</feature>
<feature type="turn" evidence="13">
    <location>
        <begin position="161"/>
        <end position="163"/>
    </location>
</feature>
<feature type="helix" evidence="13">
    <location>
        <begin position="168"/>
        <end position="170"/>
    </location>
</feature>
<feature type="helix" evidence="13">
    <location>
        <begin position="171"/>
        <end position="180"/>
    </location>
</feature>
<feature type="strand" evidence="13">
    <location>
        <begin position="186"/>
        <end position="191"/>
    </location>
</feature>
<feature type="strand" evidence="15">
    <location>
        <begin position="193"/>
        <end position="195"/>
    </location>
</feature>
<feature type="helix" evidence="13">
    <location>
        <begin position="196"/>
        <end position="204"/>
    </location>
</feature>
<feature type="strand" evidence="13">
    <location>
        <begin position="208"/>
        <end position="213"/>
    </location>
</feature>
<feature type="helix" evidence="13">
    <location>
        <begin position="216"/>
        <end position="229"/>
    </location>
</feature>
<feature type="helix" evidence="13">
    <location>
        <begin position="230"/>
        <end position="232"/>
    </location>
</feature>
<feature type="strand" evidence="13">
    <location>
        <begin position="234"/>
        <end position="242"/>
    </location>
</feature>
<feature type="helix" evidence="13">
    <location>
        <begin position="244"/>
        <end position="247"/>
    </location>
</feature>
<feature type="helix" evidence="13">
    <location>
        <begin position="248"/>
        <end position="250"/>
    </location>
</feature>
<feature type="strand" evidence="13">
    <location>
        <begin position="254"/>
        <end position="259"/>
    </location>
</feature>
<feature type="helix" evidence="13">
    <location>
        <begin position="268"/>
        <end position="273"/>
    </location>
</feature>
<feature type="strand" evidence="13">
    <location>
        <begin position="275"/>
        <end position="286"/>
    </location>
</feature>
<feature type="helix" evidence="13">
    <location>
        <begin position="287"/>
        <end position="289"/>
    </location>
</feature>
<feature type="helix" evidence="13">
    <location>
        <begin position="290"/>
        <end position="303"/>
    </location>
</feature>
<feature type="strand" evidence="13">
    <location>
        <begin position="307"/>
        <end position="319"/>
    </location>
</feature>
<feature type="strand" evidence="13">
    <location>
        <begin position="322"/>
        <end position="332"/>
    </location>
</feature>
<name>TAW22_PYRAB</name>
<accession>Q9V2G1</accession>
<accession>G8ZFU8</accession>
<keyword id="KW-0002">3D-structure</keyword>
<keyword id="KW-0963">Cytoplasm</keyword>
<keyword id="KW-0489">Methyltransferase</keyword>
<keyword id="KW-0949">S-adenosyl-L-methionine</keyword>
<keyword id="KW-0808">Transferase</keyword>
<keyword id="KW-0819">tRNA processing</keyword>
<proteinExistence type="evidence at protein level"/>
<comment type="function">
    <text evidence="2 3">Catalyzes both the N1-methylation of guanosine and the C7-methylation of 4-demethylwyosine (imG-14) at position 37 in tRNA(Phe).</text>
</comment>
<comment type="catalytic activity">
    <reaction evidence="2 3">
        <text>guanosine(37) in tRNA + S-adenosyl-L-methionine = N(1)-methylguanosine(37) in tRNA + S-adenosyl-L-homocysteine + H(+)</text>
        <dbReference type="Rhea" id="RHEA:36899"/>
        <dbReference type="Rhea" id="RHEA-COMP:10145"/>
        <dbReference type="Rhea" id="RHEA-COMP:10147"/>
        <dbReference type="ChEBI" id="CHEBI:15378"/>
        <dbReference type="ChEBI" id="CHEBI:57856"/>
        <dbReference type="ChEBI" id="CHEBI:59789"/>
        <dbReference type="ChEBI" id="CHEBI:73542"/>
        <dbReference type="ChEBI" id="CHEBI:74269"/>
        <dbReference type="EC" id="2.1.1.228"/>
    </reaction>
</comment>
<comment type="catalytic activity">
    <reaction evidence="3 7">
        <text>4-demethylwyosine(37) in tRNA(Phe) + S-adenosyl-L-methionine = isowyosine(37) in tRNA(Phe) + S-adenosyl-L-homocysteine + H(+)</text>
        <dbReference type="Rhea" id="RHEA:53056"/>
        <dbReference type="Rhea" id="RHEA-COMP:10164"/>
        <dbReference type="Rhea" id="RHEA-COMP:13445"/>
        <dbReference type="ChEBI" id="CHEBI:15378"/>
        <dbReference type="ChEBI" id="CHEBI:57856"/>
        <dbReference type="ChEBI" id="CHEBI:59789"/>
        <dbReference type="ChEBI" id="CHEBI:64315"/>
        <dbReference type="ChEBI" id="CHEBI:136979"/>
    </reaction>
</comment>
<comment type="subcellular location">
    <subcellularLocation>
        <location evidence="6">Cytoplasm</location>
    </subcellularLocation>
</comment>
<comment type="miscellaneous">
    <text evidence="7">Less efficient than Trm5b and appears to be selective for methylating tRNA(Phe).</text>
</comment>
<comment type="similarity">
    <text evidence="1">Belongs to the class I-like SAM-binding methyltransferase superfamily. TRM5/TYW2 family.</text>
</comment>